<reference key="1">
    <citation type="journal article" date="2001" name="Nature">
        <title>Genome sequence of enterohaemorrhagic Escherichia coli O157:H7.</title>
        <authorList>
            <person name="Perna N.T."/>
            <person name="Plunkett G. III"/>
            <person name="Burland V."/>
            <person name="Mau B."/>
            <person name="Glasner J.D."/>
            <person name="Rose D.J."/>
            <person name="Mayhew G.F."/>
            <person name="Evans P.S."/>
            <person name="Gregor J."/>
            <person name="Kirkpatrick H.A."/>
            <person name="Posfai G."/>
            <person name="Hackett J."/>
            <person name="Klink S."/>
            <person name="Boutin A."/>
            <person name="Shao Y."/>
            <person name="Miller L."/>
            <person name="Grotbeck E.J."/>
            <person name="Davis N.W."/>
            <person name="Lim A."/>
            <person name="Dimalanta E.T."/>
            <person name="Potamousis K."/>
            <person name="Apodaca J."/>
            <person name="Anantharaman T.S."/>
            <person name="Lin J."/>
            <person name="Yen G."/>
            <person name="Schwartz D.C."/>
            <person name="Welch R.A."/>
            <person name="Blattner F.R."/>
        </authorList>
    </citation>
    <scope>NUCLEOTIDE SEQUENCE [LARGE SCALE GENOMIC DNA]</scope>
    <source>
        <strain>O157:H7 / EDL933 / ATCC 700927 / EHEC</strain>
    </source>
</reference>
<reference key="2">
    <citation type="journal article" date="2001" name="DNA Res.">
        <title>Complete genome sequence of enterohemorrhagic Escherichia coli O157:H7 and genomic comparison with a laboratory strain K-12.</title>
        <authorList>
            <person name="Hayashi T."/>
            <person name="Makino K."/>
            <person name="Ohnishi M."/>
            <person name="Kurokawa K."/>
            <person name="Ishii K."/>
            <person name="Yokoyama K."/>
            <person name="Han C.-G."/>
            <person name="Ohtsubo E."/>
            <person name="Nakayama K."/>
            <person name="Murata T."/>
            <person name="Tanaka M."/>
            <person name="Tobe T."/>
            <person name="Iida T."/>
            <person name="Takami H."/>
            <person name="Honda T."/>
            <person name="Sasakawa C."/>
            <person name="Ogasawara N."/>
            <person name="Yasunaga T."/>
            <person name="Kuhara S."/>
            <person name="Shiba T."/>
            <person name="Hattori M."/>
            <person name="Shinagawa H."/>
        </authorList>
    </citation>
    <scope>NUCLEOTIDE SEQUENCE [LARGE SCALE GENOMIC DNA]</scope>
    <source>
        <strain>O157:H7 / Sakai / RIMD 0509952 / EHEC</strain>
    </source>
</reference>
<gene>
    <name type="primary">yhhS</name>
    <name type="ordered locus">Z4847</name>
    <name type="ordered locus">ECs4322</name>
</gene>
<organism>
    <name type="scientific">Escherichia coli O157:H7</name>
    <dbReference type="NCBI Taxonomy" id="83334"/>
    <lineage>
        <taxon>Bacteria</taxon>
        <taxon>Pseudomonadati</taxon>
        <taxon>Pseudomonadota</taxon>
        <taxon>Gammaproteobacteria</taxon>
        <taxon>Enterobacterales</taxon>
        <taxon>Enterobacteriaceae</taxon>
        <taxon>Escherichia</taxon>
    </lineage>
</organism>
<keyword id="KW-0997">Cell inner membrane</keyword>
<keyword id="KW-1003">Cell membrane</keyword>
<keyword id="KW-0472">Membrane</keyword>
<keyword id="KW-1185">Reference proteome</keyword>
<keyword id="KW-0812">Transmembrane</keyword>
<keyword id="KW-1133">Transmembrane helix</keyword>
<keyword id="KW-0813">Transport</keyword>
<proteinExistence type="inferred from homology"/>
<comment type="subcellular location">
    <subcellularLocation>
        <location evidence="1">Cell inner membrane</location>
        <topology evidence="1">Multi-pass membrane protein</topology>
    </subcellularLocation>
</comment>
<comment type="similarity">
    <text evidence="1">Belongs to the major facilitator superfamily. YhhS family.</text>
</comment>
<comment type="sequence caution" evidence="2">
    <conflict type="erroneous initiation">
        <sequence resource="EMBL-CDS" id="AAG58582"/>
    </conflict>
</comment>
<comment type="sequence caution" evidence="2">
    <conflict type="erroneous initiation">
        <sequence resource="EMBL-CDS" id="BAB37745"/>
    </conflict>
</comment>
<protein>
    <recommendedName>
        <fullName evidence="1">Uncharacterized MFS-type transporter YhhS</fullName>
    </recommendedName>
</protein>
<evidence type="ECO:0000255" key="1">
    <source>
        <dbReference type="HAMAP-Rule" id="MF_01118"/>
    </source>
</evidence>
<evidence type="ECO:0000305" key="2"/>
<accession>Q8X6P4</accession>
<name>YHHS_ECO57</name>
<feature type="chain" id="PRO_0000087809" description="Uncharacterized MFS-type transporter YhhS">
    <location>
        <begin position="1"/>
        <end position="405"/>
    </location>
</feature>
<feature type="transmembrane region" description="Helical" evidence="1">
    <location>
        <begin position="19"/>
        <end position="39"/>
    </location>
</feature>
<feature type="transmembrane region" description="Helical" evidence="1">
    <location>
        <begin position="47"/>
        <end position="67"/>
    </location>
</feature>
<feature type="transmembrane region" description="Helical" evidence="1">
    <location>
        <begin position="85"/>
        <end position="105"/>
    </location>
</feature>
<feature type="transmembrane region" description="Helical" evidence="1">
    <location>
        <begin position="129"/>
        <end position="149"/>
    </location>
</feature>
<feature type="transmembrane region" description="Helical" evidence="1">
    <location>
        <begin position="157"/>
        <end position="177"/>
    </location>
</feature>
<feature type="transmembrane region" description="Helical" evidence="1">
    <location>
        <begin position="178"/>
        <end position="198"/>
    </location>
</feature>
<feature type="transmembrane region" description="Helical" evidence="1">
    <location>
        <begin position="224"/>
        <end position="244"/>
    </location>
</feature>
<feature type="transmembrane region" description="Helical" evidence="1">
    <location>
        <begin position="252"/>
        <end position="272"/>
    </location>
</feature>
<feature type="transmembrane region" description="Helical" evidence="1">
    <location>
        <begin position="283"/>
        <end position="303"/>
    </location>
</feature>
<feature type="transmembrane region" description="Helical" evidence="1">
    <location>
        <begin position="309"/>
        <end position="329"/>
    </location>
</feature>
<feature type="transmembrane region" description="Helical" evidence="1">
    <location>
        <begin position="344"/>
        <end position="364"/>
    </location>
</feature>
<feature type="transmembrane region" description="Helical" evidence="1">
    <location>
        <begin position="366"/>
        <end position="386"/>
    </location>
</feature>
<dbReference type="EMBL" id="AE005174">
    <property type="protein sequence ID" value="AAG58582.1"/>
    <property type="status" value="ALT_INIT"/>
    <property type="molecule type" value="Genomic_DNA"/>
</dbReference>
<dbReference type="EMBL" id="BA000007">
    <property type="protein sequence ID" value="BAB37745.1"/>
    <property type="status" value="ALT_INIT"/>
    <property type="molecule type" value="Genomic_DNA"/>
</dbReference>
<dbReference type="PIR" id="B86015">
    <property type="entry name" value="B86015"/>
</dbReference>
<dbReference type="PIR" id="B91169">
    <property type="entry name" value="B91169"/>
</dbReference>
<dbReference type="RefSeq" id="NP_312349.2">
    <property type="nucleotide sequence ID" value="NC_002695.1"/>
</dbReference>
<dbReference type="RefSeq" id="WP_001412007.1">
    <property type="nucleotide sequence ID" value="NZ_SDVX01000004.1"/>
</dbReference>
<dbReference type="SMR" id="Q8X6P4"/>
<dbReference type="STRING" id="155864.Z4847"/>
<dbReference type="GeneID" id="915820"/>
<dbReference type="KEGG" id="ece:Z4847"/>
<dbReference type="KEGG" id="ecs:ECs_4322"/>
<dbReference type="PATRIC" id="fig|386585.9.peg.4515"/>
<dbReference type="eggNOG" id="COG0477">
    <property type="taxonomic scope" value="Bacteria"/>
</dbReference>
<dbReference type="HOGENOM" id="CLU_001265_10_3_6"/>
<dbReference type="Proteomes" id="UP000000558">
    <property type="component" value="Chromosome"/>
</dbReference>
<dbReference type="Proteomes" id="UP000002519">
    <property type="component" value="Chromosome"/>
</dbReference>
<dbReference type="GO" id="GO:0005886">
    <property type="term" value="C:plasma membrane"/>
    <property type="evidence" value="ECO:0007669"/>
    <property type="project" value="UniProtKB-SubCell"/>
</dbReference>
<dbReference type="GO" id="GO:0022857">
    <property type="term" value="F:transmembrane transporter activity"/>
    <property type="evidence" value="ECO:0007669"/>
    <property type="project" value="UniProtKB-UniRule"/>
</dbReference>
<dbReference type="CDD" id="cd17489">
    <property type="entry name" value="MFS_YfcJ_like"/>
    <property type="match status" value="1"/>
</dbReference>
<dbReference type="FunFam" id="1.20.1250.20:FF:000155">
    <property type="entry name" value="Uncharacterized MFS-type transporter YhhS"/>
    <property type="match status" value="1"/>
</dbReference>
<dbReference type="Gene3D" id="1.20.1250.20">
    <property type="entry name" value="MFS general substrate transporter like domains"/>
    <property type="match status" value="1"/>
</dbReference>
<dbReference type="HAMAP" id="MF_01118">
    <property type="entry name" value="MFS_YhhS"/>
    <property type="match status" value="1"/>
</dbReference>
<dbReference type="InterPro" id="IPR011701">
    <property type="entry name" value="MFS"/>
</dbReference>
<dbReference type="InterPro" id="IPR020846">
    <property type="entry name" value="MFS_dom"/>
</dbReference>
<dbReference type="InterPro" id="IPR036259">
    <property type="entry name" value="MFS_trans_sf"/>
</dbReference>
<dbReference type="InterPro" id="IPR050171">
    <property type="entry name" value="MFS_Transporters"/>
</dbReference>
<dbReference type="InterPro" id="IPR023008">
    <property type="entry name" value="MFS_YhhS-like"/>
</dbReference>
<dbReference type="NCBIfam" id="NF003477">
    <property type="entry name" value="PRK05122.1"/>
    <property type="match status" value="1"/>
</dbReference>
<dbReference type="PANTHER" id="PTHR23517:SF13">
    <property type="entry name" value="MAJOR FACILITATOR SUPERFAMILY MFS_1"/>
    <property type="match status" value="1"/>
</dbReference>
<dbReference type="PANTHER" id="PTHR23517">
    <property type="entry name" value="RESISTANCE PROTEIN MDTM, PUTATIVE-RELATED-RELATED"/>
    <property type="match status" value="1"/>
</dbReference>
<dbReference type="Pfam" id="PF07690">
    <property type="entry name" value="MFS_1"/>
    <property type="match status" value="1"/>
</dbReference>
<dbReference type="SUPFAM" id="SSF103473">
    <property type="entry name" value="MFS general substrate transporter"/>
    <property type="match status" value="1"/>
</dbReference>
<dbReference type="PROSITE" id="PS50850">
    <property type="entry name" value="MFS"/>
    <property type="match status" value="1"/>
</dbReference>
<sequence>MPEPVAEPALNGLRLNLRILSIVMFNFASYLTIGLPLAVLPGYVHDVMGFSAFWAGLVISLQYFATLLSRPHAGRYADLLGPKKIVVFGLCGCFLSGLGYLTAGLTASLPVISLLLLCLGRVILGIGQSFAGTGSTLWGVGVVGSLHIGRVISWNDIVTYGAMAMGAPLGVVFYHWGGLQALALIIMGVALVAILLAIPRPTVKASKGKPLPFRAVLGRVWLYGMALALASAGFGVIATFITLFYDVKGWDGAAFALTLFSCAFVGTRLLFPNGINRIGGLNVAMICFSVEIIGLLLVGVATMPWMAKIGVLLAGAGFSLVFPALGVVAVKAVPQQNQGAALATYTVFMDLSLGVTGPLAGLVMSWAGVPVIYLAAAGLVAIALLLTWRLKKRPPEHVPEAASSS</sequence>